<reference key="1">
    <citation type="journal article" date="2007" name="Appl. Environ. Microbiol.">
        <title>Genome sequence of the cellulolytic gliding bacterium Cytophaga hutchinsonii.</title>
        <authorList>
            <person name="Xie G."/>
            <person name="Bruce D.C."/>
            <person name="Challacombe J.F."/>
            <person name="Chertkov O."/>
            <person name="Detter J.C."/>
            <person name="Gilna P."/>
            <person name="Han C.S."/>
            <person name="Lucas S."/>
            <person name="Misra M."/>
            <person name="Myers G.L."/>
            <person name="Richardson P."/>
            <person name="Tapia R."/>
            <person name="Thayer N."/>
            <person name="Thompson L.S."/>
            <person name="Brettin T.S."/>
            <person name="Henrissat B."/>
            <person name="Wilson D.B."/>
            <person name="McBride M.J."/>
        </authorList>
    </citation>
    <scope>NUCLEOTIDE SEQUENCE [LARGE SCALE GENOMIC DNA]</scope>
    <source>
        <strain>ATCC 33406 / DSM 1761 / JCM 20678 / CIP 103989 / IAM 12607 / NBRC 15051 / NCIMB 9469 / D465</strain>
    </source>
</reference>
<keyword id="KW-0067">ATP-binding</keyword>
<keyword id="KW-0460">Magnesium</keyword>
<keyword id="KW-0547">Nucleotide-binding</keyword>
<keyword id="KW-1185">Reference proteome</keyword>
<keyword id="KW-0808">Transferase</keyword>
<keyword id="KW-0819">tRNA processing</keyword>
<evidence type="ECO:0000255" key="1">
    <source>
        <dbReference type="HAMAP-Rule" id="MF_00185"/>
    </source>
</evidence>
<accession>Q11RE0</accession>
<gene>
    <name evidence="1" type="primary">miaA</name>
    <name type="ordered locus">CHU_2776</name>
</gene>
<dbReference type="EC" id="2.5.1.75" evidence="1"/>
<dbReference type="EMBL" id="CP000383">
    <property type="protein sequence ID" value="ABG60025.1"/>
    <property type="molecule type" value="Genomic_DNA"/>
</dbReference>
<dbReference type="RefSeq" id="WP_011586134.1">
    <property type="nucleotide sequence ID" value="NC_008255.1"/>
</dbReference>
<dbReference type="SMR" id="Q11RE0"/>
<dbReference type="STRING" id="269798.CHU_2776"/>
<dbReference type="KEGG" id="chu:CHU_2776"/>
<dbReference type="eggNOG" id="COG0324">
    <property type="taxonomic scope" value="Bacteria"/>
</dbReference>
<dbReference type="HOGENOM" id="CLU_032616_0_1_10"/>
<dbReference type="OrthoDB" id="9776390at2"/>
<dbReference type="Proteomes" id="UP000001822">
    <property type="component" value="Chromosome"/>
</dbReference>
<dbReference type="GO" id="GO:0005524">
    <property type="term" value="F:ATP binding"/>
    <property type="evidence" value="ECO:0007669"/>
    <property type="project" value="UniProtKB-UniRule"/>
</dbReference>
<dbReference type="GO" id="GO:0052381">
    <property type="term" value="F:tRNA dimethylallyltransferase activity"/>
    <property type="evidence" value="ECO:0007669"/>
    <property type="project" value="UniProtKB-UniRule"/>
</dbReference>
<dbReference type="GO" id="GO:0006400">
    <property type="term" value="P:tRNA modification"/>
    <property type="evidence" value="ECO:0007669"/>
    <property type="project" value="TreeGrafter"/>
</dbReference>
<dbReference type="Gene3D" id="1.10.20.140">
    <property type="match status" value="1"/>
</dbReference>
<dbReference type="Gene3D" id="3.40.50.300">
    <property type="entry name" value="P-loop containing nucleotide triphosphate hydrolases"/>
    <property type="match status" value="1"/>
</dbReference>
<dbReference type="HAMAP" id="MF_00185">
    <property type="entry name" value="IPP_trans"/>
    <property type="match status" value="1"/>
</dbReference>
<dbReference type="InterPro" id="IPR039657">
    <property type="entry name" value="Dimethylallyltransferase"/>
</dbReference>
<dbReference type="InterPro" id="IPR018022">
    <property type="entry name" value="IPT"/>
</dbReference>
<dbReference type="InterPro" id="IPR027417">
    <property type="entry name" value="P-loop_NTPase"/>
</dbReference>
<dbReference type="NCBIfam" id="TIGR00174">
    <property type="entry name" value="miaA"/>
    <property type="match status" value="1"/>
</dbReference>
<dbReference type="PANTHER" id="PTHR11088">
    <property type="entry name" value="TRNA DIMETHYLALLYLTRANSFERASE"/>
    <property type="match status" value="1"/>
</dbReference>
<dbReference type="PANTHER" id="PTHR11088:SF60">
    <property type="entry name" value="TRNA DIMETHYLALLYLTRANSFERASE"/>
    <property type="match status" value="1"/>
</dbReference>
<dbReference type="Pfam" id="PF01715">
    <property type="entry name" value="IPPT"/>
    <property type="match status" value="1"/>
</dbReference>
<dbReference type="SUPFAM" id="SSF52540">
    <property type="entry name" value="P-loop containing nucleoside triphosphate hydrolases"/>
    <property type="match status" value="1"/>
</dbReference>
<feature type="chain" id="PRO_1000020592" description="tRNA dimethylallyltransferase">
    <location>
        <begin position="1"/>
        <end position="304"/>
    </location>
</feature>
<feature type="region of interest" description="Interaction with substrate tRNA" evidence="1">
    <location>
        <begin position="38"/>
        <end position="41"/>
    </location>
</feature>
<feature type="binding site" evidence="1">
    <location>
        <begin position="13"/>
        <end position="20"/>
    </location>
    <ligand>
        <name>ATP</name>
        <dbReference type="ChEBI" id="CHEBI:30616"/>
    </ligand>
</feature>
<feature type="binding site" evidence="1">
    <location>
        <begin position="15"/>
        <end position="20"/>
    </location>
    <ligand>
        <name>substrate</name>
    </ligand>
</feature>
<feature type="site" description="Interaction with substrate tRNA" evidence="1">
    <location>
        <position position="104"/>
    </location>
</feature>
<feature type="site" description="Interaction with substrate tRNA" evidence="1">
    <location>
        <position position="126"/>
    </location>
</feature>
<comment type="function">
    <text evidence="1">Catalyzes the transfer of a dimethylallyl group onto the adenine at position 37 in tRNAs that read codons beginning with uridine, leading to the formation of N6-(dimethylallyl)adenosine (i(6)A).</text>
</comment>
<comment type="catalytic activity">
    <reaction evidence="1">
        <text>adenosine(37) in tRNA + dimethylallyl diphosphate = N(6)-dimethylallyladenosine(37) in tRNA + diphosphate</text>
        <dbReference type="Rhea" id="RHEA:26482"/>
        <dbReference type="Rhea" id="RHEA-COMP:10162"/>
        <dbReference type="Rhea" id="RHEA-COMP:10375"/>
        <dbReference type="ChEBI" id="CHEBI:33019"/>
        <dbReference type="ChEBI" id="CHEBI:57623"/>
        <dbReference type="ChEBI" id="CHEBI:74411"/>
        <dbReference type="ChEBI" id="CHEBI:74415"/>
        <dbReference type="EC" id="2.5.1.75"/>
    </reaction>
</comment>
<comment type="cofactor">
    <cofactor evidence="1">
        <name>Mg(2+)</name>
        <dbReference type="ChEBI" id="CHEBI:18420"/>
    </cofactor>
</comment>
<comment type="subunit">
    <text evidence="1">Monomer.</text>
</comment>
<comment type="similarity">
    <text evidence="1">Belongs to the IPP transferase family.</text>
</comment>
<sequence>MSFINKYVIVVVGPTAAGKTALAVSLAKRFNTAVLSADSRQVFKELSIGTAKATMEEQDGVPHYFVDSISIEESFNAGMFEREGLQLLDTLFLKHDVVIVCGGTGLYVKALLEGMDALPQADPELREALNREFEQRGLEVMTGELKEIDPETHAVIDLKNPLRVFRAIEVYRQTGKPLSSFKTGAKQERPFKTIRIGLNMPREELYARIDRRMDRMLEAGLEKEARDNIQYRNYNALQTVGYSEIFGFIDGLYDREEMIRLLKRNSRRYAKRQLTWFSKDAEVKWFHPGEITEITTFIEAKLQE</sequence>
<protein>
    <recommendedName>
        <fullName evidence="1">tRNA dimethylallyltransferase</fullName>
        <ecNumber evidence="1">2.5.1.75</ecNumber>
    </recommendedName>
    <alternativeName>
        <fullName evidence="1">Dimethylallyl diphosphate:tRNA dimethylallyltransferase</fullName>
        <shortName evidence="1">DMAPP:tRNA dimethylallyltransferase</shortName>
        <shortName evidence="1">DMATase</shortName>
    </alternativeName>
    <alternativeName>
        <fullName evidence="1">Isopentenyl-diphosphate:tRNA isopentenyltransferase</fullName>
        <shortName evidence="1">IPP transferase</shortName>
        <shortName evidence="1">IPPT</shortName>
        <shortName evidence="1">IPTase</shortName>
    </alternativeName>
</protein>
<organism>
    <name type="scientific">Cytophaga hutchinsonii (strain ATCC 33406 / DSM 1761 / CIP 103989 / NBRC 15051 / NCIMB 9469 / D465)</name>
    <dbReference type="NCBI Taxonomy" id="269798"/>
    <lineage>
        <taxon>Bacteria</taxon>
        <taxon>Pseudomonadati</taxon>
        <taxon>Bacteroidota</taxon>
        <taxon>Cytophagia</taxon>
        <taxon>Cytophagales</taxon>
        <taxon>Cytophagaceae</taxon>
        <taxon>Cytophaga</taxon>
    </lineage>
</organism>
<proteinExistence type="inferred from homology"/>
<name>MIAA_CYTH3</name>